<feature type="signal peptide" evidence="2">
    <location>
        <begin position="1"/>
        <end position="24"/>
    </location>
</feature>
<feature type="chain" id="PRO_0000009324" description="Outer membrane usher protein PefC">
    <location>
        <begin position="25"/>
        <end position="802"/>
    </location>
</feature>
<feature type="disulfide bond" evidence="2">
    <location>
        <begin position="782"/>
        <end position="801"/>
    </location>
</feature>
<feature type="sequence conflict" description="In Ref. 1 and 2." evidence="3" ref="1 2">
    <original>V</original>
    <variation>I</variation>
    <location>
        <position position="552"/>
    </location>
</feature>
<feature type="sequence conflict" description="In Ref. 1 and 2." evidence="3" ref="1 2">
    <original>S</original>
    <variation>N</variation>
    <location>
        <position position="563"/>
    </location>
</feature>
<name>PEFC_SALTY</name>
<protein>
    <recommendedName>
        <fullName>Outer membrane usher protein PefC</fullName>
    </recommendedName>
</protein>
<comment type="function">
    <text>Involved in the export and assembly of FimA fimbrial subunits across the outer membrane.</text>
</comment>
<comment type="subcellular location">
    <subcellularLocation>
        <location evidence="1">Cell outer membrane</location>
        <topology evidence="1">Multi-pass membrane protein</topology>
    </subcellularLocation>
</comment>
<comment type="similarity">
    <text evidence="3">Belongs to the fimbrial export usher family.</text>
</comment>
<organism>
    <name type="scientific">Salmonella typhimurium (strain LT2 / SGSC1412 / ATCC 700720)</name>
    <dbReference type="NCBI Taxonomy" id="99287"/>
    <lineage>
        <taxon>Bacteria</taxon>
        <taxon>Pseudomonadati</taxon>
        <taxon>Pseudomonadota</taxon>
        <taxon>Gammaproteobacteria</taxon>
        <taxon>Enterobacterales</taxon>
        <taxon>Enterobacteriaceae</taxon>
        <taxon>Salmonella</taxon>
    </lineage>
</organism>
<keyword id="KW-0998">Cell outer membrane</keyword>
<keyword id="KW-1015">Disulfide bond</keyword>
<keyword id="KW-1029">Fimbrium biogenesis</keyword>
<keyword id="KW-0472">Membrane</keyword>
<keyword id="KW-0614">Plasmid</keyword>
<keyword id="KW-1185">Reference proteome</keyword>
<keyword id="KW-0732">Signal</keyword>
<keyword id="KW-0812">Transmembrane</keyword>
<keyword id="KW-1134">Transmembrane beta strand</keyword>
<keyword id="KW-0813">Transport</keyword>
<gene>
    <name type="primary">pefC</name>
    <name type="ordered locus">PSLT017</name>
</gene>
<dbReference type="EMBL" id="M37853">
    <property type="protein sequence ID" value="AAA63534.1"/>
    <property type="molecule type" value="Genomic_DNA"/>
</dbReference>
<dbReference type="EMBL" id="L08613">
    <property type="protein sequence ID" value="AAC36960.1"/>
    <property type="molecule type" value="Unassigned_DNA"/>
</dbReference>
<dbReference type="EMBL" id="AE006471">
    <property type="protein sequence ID" value="AAL23521.1"/>
    <property type="molecule type" value="Genomic_DNA"/>
</dbReference>
<dbReference type="PIR" id="A37142">
    <property type="entry name" value="A37142"/>
</dbReference>
<dbReference type="RefSeq" id="NP_490509.1">
    <property type="nucleotide sequence ID" value="NC_003277.2"/>
</dbReference>
<dbReference type="RefSeq" id="WP_000007893.1">
    <property type="nucleotide sequence ID" value="NC_003277.2"/>
</dbReference>
<dbReference type="SMR" id="P37868"/>
<dbReference type="GeneID" id="1256222"/>
<dbReference type="KEGG" id="stm:PSLT017"/>
<dbReference type="PATRIC" id="fig|99287.12.peg.4866"/>
<dbReference type="HOGENOM" id="CLU_009120_1_1_6"/>
<dbReference type="OMA" id="PENVEWD"/>
<dbReference type="PhylomeDB" id="P37868"/>
<dbReference type="BioCyc" id="SENT99287:PSLT017-MONOMER"/>
<dbReference type="Proteomes" id="UP000001014">
    <property type="component" value="Plasmid pSLT"/>
</dbReference>
<dbReference type="GO" id="GO:0009279">
    <property type="term" value="C:cell outer membrane"/>
    <property type="evidence" value="ECO:0000318"/>
    <property type="project" value="GO_Central"/>
</dbReference>
<dbReference type="GO" id="GO:0015473">
    <property type="term" value="F:fimbrial usher porin activity"/>
    <property type="evidence" value="ECO:0000318"/>
    <property type="project" value="GO_Central"/>
</dbReference>
<dbReference type="GO" id="GO:0009297">
    <property type="term" value="P:pilus assembly"/>
    <property type="evidence" value="ECO:0000318"/>
    <property type="project" value="GO_Central"/>
</dbReference>
<dbReference type="Gene3D" id="2.60.40.3110">
    <property type="match status" value="1"/>
</dbReference>
<dbReference type="Gene3D" id="3.10.20.410">
    <property type="match status" value="1"/>
</dbReference>
<dbReference type="Gene3D" id="2.60.40.2610">
    <property type="entry name" value="Outer membrane usher protein FimD, plug domain"/>
    <property type="match status" value="1"/>
</dbReference>
<dbReference type="InterPro" id="IPR000015">
    <property type="entry name" value="Fimb_usher"/>
</dbReference>
<dbReference type="InterPro" id="IPR018030">
    <property type="entry name" value="Fimbrial_membr_usher_CS"/>
</dbReference>
<dbReference type="InterPro" id="IPR042186">
    <property type="entry name" value="FimD_plug_dom"/>
</dbReference>
<dbReference type="InterPro" id="IPR025885">
    <property type="entry name" value="PapC_N"/>
</dbReference>
<dbReference type="InterPro" id="IPR037224">
    <property type="entry name" value="PapC_N_sf"/>
</dbReference>
<dbReference type="NCBIfam" id="NF011760">
    <property type="entry name" value="PRK15213.1"/>
    <property type="match status" value="1"/>
</dbReference>
<dbReference type="PANTHER" id="PTHR30451:SF21">
    <property type="entry name" value="FIMBRIAL USHER DOMAIN-CONTAINING PROTEIN YDET-RELATED"/>
    <property type="match status" value="1"/>
</dbReference>
<dbReference type="PANTHER" id="PTHR30451">
    <property type="entry name" value="OUTER MEMBRANE USHER PROTEIN"/>
    <property type="match status" value="1"/>
</dbReference>
<dbReference type="Pfam" id="PF13954">
    <property type="entry name" value="PapC_N"/>
    <property type="match status" value="1"/>
</dbReference>
<dbReference type="Pfam" id="PF00577">
    <property type="entry name" value="Usher"/>
    <property type="match status" value="1"/>
</dbReference>
<dbReference type="SUPFAM" id="SSF141729">
    <property type="entry name" value="FimD N-terminal domain-like"/>
    <property type="match status" value="1"/>
</dbReference>
<dbReference type="PROSITE" id="PS01151">
    <property type="entry name" value="FIMBRIAL_USHER"/>
    <property type="match status" value="1"/>
</dbReference>
<reference key="1">
    <citation type="journal article" date="1990" name="J. Bacteriol.">
        <title>Genes on the 90-kilobase plasmid of Salmonella typhimurium confer low-affinity cobalamin transport: relationship to fimbria biosynthesis genes.</title>
        <authorList>
            <person name="Rioux C.R."/>
            <person name="Friedrich M.J."/>
            <person name="Kadner R.J."/>
        </authorList>
    </citation>
    <scope>NUCLEOTIDE SEQUENCE [GENOMIC DNA]</scope>
    <source>
        <plasmid>90 kb virulence</plasmid>
    </source>
</reference>
<reference key="2">
    <citation type="journal article" date="1993" name="Mol. Microbiol.">
        <title>Nucleotide sequence of a 13.9 kb segment of the 90 kb virulence plasmid of Salmonella typhimurium: the presence of fimbrial biosynthetic genes.</title>
        <authorList>
            <person name="Friedrich M.J."/>
            <person name="Kinsey N.E."/>
            <person name="Vila J."/>
            <person name="Kadner R.J."/>
        </authorList>
    </citation>
    <scope>NUCLEOTIDE SEQUENCE [GENOMIC DNA]</scope>
    <source>
        <plasmid>90 kb virulence</plasmid>
    </source>
</reference>
<reference key="3">
    <citation type="journal article" date="2001" name="Nature">
        <title>Complete genome sequence of Salmonella enterica serovar Typhimurium LT2.</title>
        <authorList>
            <person name="McClelland M."/>
            <person name="Sanderson K.E."/>
            <person name="Spieth J."/>
            <person name="Clifton S.W."/>
            <person name="Latreille P."/>
            <person name="Courtney L."/>
            <person name="Porwollik S."/>
            <person name="Ali J."/>
            <person name="Dante M."/>
            <person name="Du F."/>
            <person name="Hou S."/>
            <person name="Layman D."/>
            <person name="Leonard S."/>
            <person name="Nguyen C."/>
            <person name="Scott K."/>
            <person name="Holmes A."/>
            <person name="Grewal N."/>
            <person name="Mulvaney E."/>
            <person name="Ryan E."/>
            <person name="Sun H."/>
            <person name="Florea L."/>
            <person name="Miller W."/>
            <person name="Stoneking T."/>
            <person name="Nhan M."/>
            <person name="Waterston R."/>
            <person name="Wilson R.K."/>
        </authorList>
    </citation>
    <scope>NUCLEOTIDE SEQUENCE [LARGE SCALE GENOMIC DNA]</scope>
    <source>
        <strain>LT2 / SGSC1412 / ATCC 700720</strain>
        <plasmid>pSLT</plasmid>
    </source>
</reference>
<evidence type="ECO:0000250" key="1"/>
<evidence type="ECO:0000255" key="2"/>
<evidence type="ECO:0000305" key="3"/>
<accession>P37868</accession>
<accession>Q93GS1</accession>
<proteinExistence type="inferred from homology"/>
<sequence length="802" mass="86370">MSFHHRVFKLSALSLALFSHLSFASTDSELNLDFLQGMSAIPSVLKSGSDFPAGQYYVDVIVNQENVGKARLSITPQEESANALCLSPEWLKAAGVPVRLEGYASTLNAAGQCYVLSRNPYTRVDFSYGSQSLVFSIPQSFLVGKTDPSRWDYGVPAARLKYSANASQTSGQSTSAYANADLMVNLGRWVLASNMSASRYADGSGEFTARDITLSTAISQVQGDLLLGKSQTRSALFSDFGFYGAALRSNSNMLPWEARGYAPLITGVANSTSRVTISQNGYAVYSKVVPPGPYQLDDVRSVGNGDLVVTVEDASGHKTTTVYPVTTLPTLLRPGEVEYNVAVGRKSSNYKLKKPFADGENGMFWMGSVGYGFDSTTLNAASILHGKYQAGGVSVTQALGGFGAVSAGMNLSQAKYDNGDNKRGHSVSAKYAKSFSDSSDLQLLAYRYQSKGYVEFADFYSTDRYTRYNTKSRYEMRFSQRLGNSNLNLAGWQEDYWWMKGKAIGGDVSLSTTILDGVSVFLNGSYSKRPYLDKPDYSTSLSFSIPFTLGGVRHYSSTGLSYSSSGRMGMNSGVSASPTDRLSYGLNTNLSDKGDRSLSGNLSYGFDAIQTNMMLSQGRDNTTVSGSVSGTILGTADSGLMMTKETGNTLGVARIPGVKGVRINGSAPTNSKGYTVVNLSDYSLNRVSVDMENVPDDLELQTTSFNVVPTEKAVVYREFGAEHVLRYILRVKERDGRILNGGSAQTEQGLDAGFIAGNGVLLMNMLSAPSRVSVERGDGSVCHFSVKGIVPNTGKVQEVYCE</sequence>
<geneLocation type="plasmid">
    <name>pSLT</name>
</geneLocation>
<geneLocation type="plasmid">
    <name>90 kb virulence</name>
</geneLocation>